<organism>
    <name type="scientific">Arabidopsis thaliana</name>
    <name type="common">Mouse-ear cress</name>
    <dbReference type="NCBI Taxonomy" id="3702"/>
    <lineage>
        <taxon>Eukaryota</taxon>
        <taxon>Viridiplantae</taxon>
        <taxon>Streptophyta</taxon>
        <taxon>Embryophyta</taxon>
        <taxon>Tracheophyta</taxon>
        <taxon>Spermatophyta</taxon>
        <taxon>Magnoliopsida</taxon>
        <taxon>eudicotyledons</taxon>
        <taxon>Gunneridae</taxon>
        <taxon>Pentapetalae</taxon>
        <taxon>rosids</taxon>
        <taxon>malvids</taxon>
        <taxon>Brassicales</taxon>
        <taxon>Brassicaceae</taxon>
        <taxon>Camelineae</taxon>
        <taxon>Arabidopsis</taxon>
    </lineage>
</organism>
<gene>
    <name evidence="7" type="primary">ARP4</name>
    <name evidence="9" type="ordered locus">At1g18450</name>
    <name evidence="10" type="ORF">F15H18.8</name>
</gene>
<evidence type="ECO:0000256" key="1">
    <source>
        <dbReference type="SAM" id="MobiDB-lite"/>
    </source>
</evidence>
<evidence type="ECO:0000269" key="2">
    <source>
    </source>
</evidence>
<evidence type="ECO:0000269" key="3">
    <source>
    </source>
</evidence>
<evidence type="ECO:0000269" key="4">
    <source>
    </source>
</evidence>
<evidence type="ECO:0000269" key="5">
    <source>
    </source>
</evidence>
<evidence type="ECO:0000269" key="6">
    <source ref="10"/>
</evidence>
<evidence type="ECO:0000303" key="7">
    <source>
    </source>
</evidence>
<evidence type="ECO:0000305" key="8"/>
<evidence type="ECO:0000312" key="9">
    <source>
        <dbReference type="Araport" id="AT1G18450"/>
    </source>
</evidence>
<evidence type="ECO:0000312" key="10">
    <source>
        <dbReference type="EMBL" id="AAF25998.1"/>
    </source>
</evidence>
<sequence length="441" mass="48937">MYGGDEVSAIVVDLGSHTCKAGYAGEDAPKAVFPSVIGAVDGVEAMDVDVDSTKTNSNSEDSKTESEKEKSKRKLYVGSQAMSYRRDHMEVLSPIKDGIVSDWDLVDNIWEHAFKSCLMIDPTEHPMLLAEPPLNTQQQREKAAELMFEKYKVPALFMAKNPVLTSFATGRATSLVVDCGGGSTTISPVHDGYVLQKAVVSSPLGGEFLTDCLLKSLESKGIKIRPRYSFKRKEVRAGEFQVEDVDIPDTTESYKLFCQRMIVGDIKDSICRVPDTPYDDKSYSNIPTTSYELPDGQTLEIGADRFKVPDVMFNPSIVQTIPGMEKYAEMIPSVRGLPHMVMESINKCDVDIRRELYSSILLAGGTSSMQQLKERLEKDLIEESPHSARVKVLASGNTTERRFSVWIGGSILASLGSFQQMWFSKSEYEEHGASYIQRKCP</sequence>
<proteinExistence type="evidence at protein level"/>
<comment type="function">
    <text evidence="5">Involved in several developmental processes including organization of plant organs, flowering time, anther development, flower senescence and fertility, probably by regulating the chromatin structure.</text>
</comment>
<comment type="subunit">
    <text evidence="6">Component of the SWR1 chromatin-remodeling complex and of the NuA4 histone acetyltransferase complex. Interacts with the SWI/SNF complex. Interacts with EAF1A and EAF1B.</text>
</comment>
<comment type="subcellular location">
    <subcellularLocation>
        <location evidence="3 4 5">Nucleus</location>
    </subcellularLocation>
    <subcellularLocation>
        <location evidence="3">Cytoplasm</location>
    </subcellularLocation>
    <text>Localized in the nucleus during the interphase, but is released into the cytoplasm during the mitotic phase (PubMed:12609034).</text>
</comment>
<comment type="tissue specificity">
    <text evidence="2 3">Mostly expressed in flowers, and, to a lower extent, in roots, seedlings, leaves and siliques (at protein level).</text>
</comment>
<comment type="induction">
    <text evidence="3">Before cytokinesis.</text>
</comment>
<comment type="similarity">
    <text evidence="8">Belongs to the actin family. ARP4 subfamily.</text>
</comment>
<comment type="sequence caution" evidence="8">
    <conflict type="erroneous gene model prediction">
        <sequence resource="EMBL-CDS" id="AAF25998"/>
    </conflict>
    <text>The predicted gene has been split into 2 genes: At1g18440 and At1g18450.</text>
</comment>
<name>ARP4_ARATH</name>
<accession>Q84M92</accession>
<accession>Q8LAI7</accession>
<accession>Q8LKR2</accession>
<accession>Q9LPQ9</accession>
<keyword id="KW-0156">Chromatin regulator</keyword>
<keyword id="KW-0963">Cytoplasm</keyword>
<keyword id="KW-0217">Developmental protein</keyword>
<keyword id="KW-0539">Nucleus</keyword>
<keyword id="KW-1185">Reference proteome</keyword>
<reference key="1">
    <citation type="journal article" date="2002" name="Plant Physiol.">
        <title>Arabidopsis contains ancient classes of differentially expressed actin-related protein genes.</title>
        <authorList>
            <person name="McKinney E.C."/>
            <person name="Kandasamy M.K."/>
            <person name="Meagher R.B."/>
        </authorList>
    </citation>
    <scope>NUCLEOTIDE SEQUENCE [MRNA]</scope>
    <scope>IDENTIFICATION</scope>
    <scope>TISSUE SPECIFICITY</scope>
    <scope>GENE FAMILY</scope>
    <source>
        <strain>cv. Columbia</strain>
    </source>
</reference>
<reference key="2">
    <citation type="journal article" date="2000" name="Nature">
        <title>Sequence and analysis of chromosome 1 of the plant Arabidopsis thaliana.</title>
        <authorList>
            <person name="Theologis A."/>
            <person name="Ecker J.R."/>
            <person name="Palm C.J."/>
            <person name="Federspiel N.A."/>
            <person name="Kaul S."/>
            <person name="White O."/>
            <person name="Alonso J."/>
            <person name="Altafi H."/>
            <person name="Araujo R."/>
            <person name="Bowman C.L."/>
            <person name="Brooks S.Y."/>
            <person name="Buehler E."/>
            <person name="Chan A."/>
            <person name="Chao Q."/>
            <person name="Chen H."/>
            <person name="Cheuk R.F."/>
            <person name="Chin C.W."/>
            <person name="Chung M.K."/>
            <person name="Conn L."/>
            <person name="Conway A.B."/>
            <person name="Conway A.R."/>
            <person name="Creasy T.H."/>
            <person name="Dewar K."/>
            <person name="Dunn P."/>
            <person name="Etgu P."/>
            <person name="Feldblyum T.V."/>
            <person name="Feng J.-D."/>
            <person name="Fong B."/>
            <person name="Fujii C.Y."/>
            <person name="Gill J.E."/>
            <person name="Goldsmith A.D."/>
            <person name="Haas B."/>
            <person name="Hansen N.F."/>
            <person name="Hughes B."/>
            <person name="Huizar L."/>
            <person name="Hunter J.L."/>
            <person name="Jenkins J."/>
            <person name="Johnson-Hopson C."/>
            <person name="Khan S."/>
            <person name="Khaykin E."/>
            <person name="Kim C.J."/>
            <person name="Koo H.L."/>
            <person name="Kremenetskaia I."/>
            <person name="Kurtz D.B."/>
            <person name="Kwan A."/>
            <person name="Lam B."/>
            <person name="Langin-Hooper S."/>
            <person name="Lee A."/>
            <person name="Lee J.M."/>
            <person name="Lenz C.A."/>
            <person name="Li J.H."/>
            <person name="Li Y.-P."/>
            <person name="Lin X."/>
            <person name="Liu S.X."/>
            <person name="Liu Z.A."/>
            <person name="Luros J.S."/>
            <person name="Maiti R."/>
            <person name="Marziali A."/>
            <person name="Militscher J."/>
            <person name="Miranda M."/>
            <person name="Nguyen M."/>
            <person name="Nierman W.C."/>
            <person name="Osborne B.I."/>
            <person name="Pai G."/>
            <person name="Peterson J."/>
            <person name="Pham P.K."/>
            <person name="Rizzo M."/>
            <person name="Rooney T."/>
            <person name="Rowley D."/>
            <person name="Sakano H."/>
            <person name="Salzberg S.L."/>
            <person name="Schwartz J.R."/>
            <person name="Shinn P."/>
            <person name="Southwick A.M."/>
            <person name="Sun H."/>
            <person name="Tallon L.J."/>
            <person name="Tambunga G."/>
            <person name="Toriumi M.J."/>
            <person name="Town C.D."/>
            <person name="Utterback T."/>
            <person name="Van Aken S."/>
            <person name="Vaysberg M."/>
            <person name="Vysotskaia V.S."/>
            <person name="Walker M."/>
            <person name="Wu D."/>
            <person name="Yu G."/>
            <person name="Fraser C.M."/>
            <person name="Venter J.C."/>
            <person name="Davis R.W."/>
        </authorList>
    </citation>
    <scope>NUCLEOTIDE SEQUENCE [LARGE SCALE GENOMIC DNA]</scope>
    <source>
        <strain>cv. Columbia</strain>
    </source>
</reference>
<reference key="3">
    <citation type="journal article" date="2017" name="Plant J.">
        <title>Araport11: a complete reannotation of the Arabidopsis thaliana reference genome.</title>
        <authorList>
            <person name="Cheng C.Y."/>
            <person name="Krishnakumar V."/>
            <person name="Chan A.P."/>
            <person name="Thibaud-Nissen F."/>
            <person name="Schobel S."/>
            <person name="Town C.D."/>
        </authorList>
    </citation>
    <scope>GENOME REANNOTATION</scope>
    <source>
        <strain>cv. Columbia</strain>
    </source>
</reference>
<reference key="4">
    <citation type="journal article" date="2003" name="Science">
        <title>Empirical analysis of transcriptional activity in the Arabidopsis genome.</title>
        <authorList>
            <person name="Yamada K."/>
            <person name="Lim J."/>
            <person name="Dale J.M."/>
            <person name="Chen H."/>
            <person name="Shinn P."/>
            <person name="Palm C.J."/>
            <person name="Southwick A.M."/>
            <person name="Wu H.C."/>
            <person name="Kim C.J."/>
            <person name="Nguyen M."/>
            <person name="Pham P.K."/>
            <person name="Cheuk R.F."/>
            <person name="Karlin-Newmann G."/>
            <person name="Liu S.X."/>
            <person name="Lam B."/>
            <person name="Sakano H."/>
            <person name="Wu T."/>
            <person name="Yu G."/>
            <person name="Miranda M."/>
            <person name="Quach H.L."/>
            <person name="Tripp M."/>
            <person name="Chang C.H."/>
            <person name="Lee J.M."/>
            <person name="Toriumi M.J."/>
            <person name="Chan M.M."/>
            <person name="Tang C.C."/>
            <person name="Onodera C.S."/>
            <person name="Deng J.M."/>
            <person name="Akiyama K."/>
            <person name="Ansari Y."/>
            <person name="Arakawa T."/>
            <person name="Banh J."/>
            <person name="Banno F."/>
            <person name="Bowser L."/>
            <person name="Brooks S.Y."/>
            <person name="Carninci P."/>
            <person name="Chao Q."/>
            <person name="Choy N."/>
            <person name="Enju A."/>
            <person name="Goldsmith A.D."/>
            <person name="Gurjal M."/>
            <person name="Hansen N.F."/>
            <person name="Hayashizaki Y."/>
            <person name="Johnson-Hopson C."/>
            <person name="Hsuan V.W."/>
            <person name="Iida K."/>
            <person name="Karnes M."/>
            <person name="Khan S."/>
            <person name="Koesema E."/>
            <person name="Ishida J."/>
            <person name="Jiang P.X."/>
            <person name="Jones T."/>
            <person name="Kawai J."/>
            <person name="Kamiya A."/>
            <person name="Meyers C."/>
            <person name="Nakajima M."/>
            <person name="Narusaka M."/>
            <person name="Seki M."/>
            <person name="Sakurai T."/>
            <person name="Satou M."/>
            <person name="Tamse R."/>
            <person name="Vaysberg M."/>
            <person name="Wallender E.K."/>
            <person name="Wong C."/>
            <person name="Yamamura Y."/>
            <person name="Yuan S."/>
            <person name="Shinozaki K."/>
            <person name="Davis R.W."/>
            <person name="Theologis A."/>
            <person name="Ecker J.R."/>
        </authorList>
    </citation>
    <scope>NUCLEOTIDE SEQUENCE [LARGE SCALE MRNA]</scope>
    <source>
        <strain>cv. Columbia</strain>
    </source>
</reference>
<reference key="5">
    <citation type="submission" date="2006-07" db="EMBL/GenBank/DDBJ databases">
        <title>Large-scale analysis of RIKEN Arabidopsis full-length (RAFL) cDNAs.</title>
        <authorList>
            <person name="Totoki Y."/>
            <person name="Seki M."/>
            <person name="Ishida J."/>
            <person name="Nakajima M."/>
            <person name="Enju A."/>
            <person name="Kamiya A."/>
            <person name="Narusaka M."/>
            <person name="Shin-i T."/>
            <person name="Nakagawa M."/>
            <person name="Sakamoto N."/>
            <person name="Oishi K."/>
            <person name="Kohara Y."/>
            <person name="Kobayashi M."/>
            <person name="Toyoda A."/>
            <person name="Sakaki Y."/>
            <person name="Sakurai T."/>
            <person name="Iida K."/>
            <person name="Akiyama K."/>
            <person name="Satou M."/>
            <person name="Toyoda T."/>
            <person name="Konagaya A."/>
            <person name="Carninci P."/>
            <person name="Kawai J."/>
            <person name="Hayashizaki Y."/>
            <person name="Shinozaki K."/>
        </authorList>
    </citation>
    <scope>NUCLEOTIDE SEQUENCE [LARGE SCALE MRNA]</scope>
    <source>
        <strain>cv. Columbia</strain>
    </source>
</reference>
<reference key="6">
    <citation type="submission" date="2002-03" db="EMBL/GenBank/DDBJ databases">
        <title>Full-length cDNA from Arabidopsis thaliana.</title>
        <authorList>
            <person name="Brover V.V."/>
            <person name="Troukhan M.E."/>
            <person name="Alexandrov N.A."/>
            <person name="Lu Y.-P."/>
            <person name="Flavell R.B."/>
            <person name="Feldmann K.A."/>
        </authorList>
    </citation>
    <scope>NUCLEOTIDE SEQUENCE [LARGE SCALE MRNA]</scope>
</reference>
<reference key="7">
    <citation type="journal article" date="2003" name="Plant J.">
        <title>Cell cycle-dependent association of Arabidopsis actin-related proteins AtARP4 and AtARP7 with the nucleus.</title>
        <authorList>
            <person name="Kandasamy M.K."/>
            <person name="McKinney E.C."/>
            <person name="Meagher R.B."/>
        </authorList>
    </citation>
    <scope>TISSUE SPECIFICITY</scope>
    <scope>INDUCTION</scope>
    <scope>SUBCELLULAR LOCATION</scope>
</reference>
<reference key="8">
    <citation type="journal article" date="2004" name="Trends Plant Sci.">
        <title>Plant actin-related proteins.</title>
        <authorList>
            <person name="Kandasamy M.K."/>
            <person name="Deal R.B."/>
            <person name="McKinney E.C."/>
            <person name="Meagher R.B."/>
        </authorList>
    </citation>
    <scope>SUBCELLULAR LOCATION</scope>
    <scope>REVIEW</scope>
    <scope>GENE FAMILY</scope>
    <scope>NOMENCLATURE</scope>
</reference>
<reference key="9">
    <citation type="journal article" date="2005" name="Plant J.">
        <title>Silencing the nuclear actin-related protein AtARP4 in Arabidopsis has multiple effects on plant development, including early flowering and delayed floral senescence.</title>
        <authorList>
            <person name="Kandasamy M.K."/>
            <person name="Deal R.B."/>
            <person name="McKinney E.C."/>
            <person name="Meagher R.B."/>
        </authorList>
    </citation>
    <scope>FUNCTION</scope>
    <scope>SUBCELLULAR LOCATION</scope>
</reference>
<reference key="10">
    <citation type="journal article" date="2015" name="BMC Plant Biol.">
        <title>AtEAF1 is a potential platform protein for Arabidopsis NuA4 acetyltransferase complex.</title>
        <authorList>
            <person name="Bieluszewski T."/>
            <person name="Galganski L."/>
            <person name="Sura W."/>
            <person name="Bieluszewska A."/>
            <person name="Abram M."/>
            <person name="Ludwikow A."/>
            <person name="Ziolkowski P."/>
            <person name="Sadowski J."/>
        </authorList>
    </citation>
    <scope>IDENTIFICATION IN THE NUA4 COMPLEX AND IN THE SWR1 COMPLEX</scope>
    <scope>INTERACTION WITH THE SWI/SNF COMPLEX</scope>
    <scope>INTERACTION WITH EAF1A AND EAF1B</scope>
</reference>
<protein>
    <recommendedName>
        <fullName evidence="7">Actin-related protein 4</fullName>
    </recommendedName>
</protein>
<feature type="chain" id="PRO_0000320528" description="Actin-related protein 4">
    <location>
        <begin position="1"/>
        <end position="441"/>
    </location>
</feature>
<feature type="region of interest" description="Disordered" evidence="1">
    <location>
        <begin position="48"/>
        <end position="73"/>
    </location>
</feature>
<feature type="compositionally biased region" description="Basic and acidic residues" evidence="1">
    <location>
        <begin position="60"/>
        <end position="70"/>
    </location>
</feature>
<feature type="sequence conflict" description="In Ref. 1; AAM53244." evidence="8" ref="1">
    <original>M</original>
    <variation>MG</variation>
    <location>
        <position position="1"/>
    </location>
</feature>
<feature type="sequence conflict" description="In Ref. 6; AAM65324." evidence="8" ref="6">
    <original>S</original>
    <variation>G</variation>
    <location>
        <position position="71"/>
    </location>
</feature>
<feature type="sequence conflict" description="In Ref. 6; AAM65324." evidence="8" ref="6">
    <original>E</original>
    <variation>D</variation>
    <location>
        <position position="329"/>
    </location>
</feature>
<dbReference type="EMBL" id="AF507912">
    <property type="protein sequence ID" value="AAM53244.1"/>
    <property type="molecule type" value="mRNA"/>
</dbReference>
<dbReference type="EMBL" id="AC013354">
    <property type="protein sequence ID" value="AAF25998.1"/>
    <property type="status" value="ALT_SEQ"/>
    <property type="molecule type" value="Genomic_DNA"/>
</dbReference>
<dbReference type="EMBL" id="CP002684">
    <property type="protein sequence ID" value="AEE29715.1"/>
    <property type="molecule type" value="Genomic_DNA"/>
</dbReference>
<dbReference type="EMBL" id="BT006474">
    <property type="protein sequence ID" value="AAP21282.1"/>
    <property type="molecule type" value="mRNA"/>
</dbReference>
<dbReference type="EMBL" id="AK228098">
    <property type="protein sequence ID" value="BAF00057.1"/>
    <property type="molecule type" value="mRNA"/>
</dbReference>
<dbReference type="EMBL" id="AY087788">
    <property type="protein sequence ID" value="AAM65324.1"/>
    <property type="molecule type" value="mRNA"/>
</dbReference>
<dbReference type="EMBL" id="BK000422">
    <property type="protein sequence ID" value="DAA00027.1"/>
    <property type="molecule type" value="Genomic_DNA"/>
</dbReference>
<dbReference type="PIR" id="C86318">
    <property type="entry name" value="C86318"/>
</dbReference>
<dbReference type="RefSeq" id="NP_564051.1">
    <property type="nucleotide sequence ID" value="NM_101702.4"/>
</dbReference>
<dbReference type="SMR" id="Q84M92"/>
<dbReference type="BioGRID" id="23664">
    <property type="interactions" value="101"/>
</dbReference>
<dbReference type="ComplexPortal" id="CPX-7723">
    <property type="entry name" value="BRAHMA SWI/SNF ATP-dependent chromatin remodeling complex"/>
</dbReference>
<dbReference type="ComplexPortal" id="CPX-7726">
    <property type="entry name" value="SYD-associated SWI/SNF ATP-dependent chromatin remodeling complex"/>
</dbReference>
<dbReference type="ComplexPortal" id="CPX-7727">
    <property type="entry name" value="MINU1/2-associated SWI/SNF ATP-dependent chromatin remodeling complex"/>
</dbReference>
<dbReference type="FunCoup" id="Q84M92">
    <property type="interactions" value="4212"/>
</dbReference>
<dbReference type="STRING" id="3702.Q84M92"/>
<dbReference type="iPTMnet" id="Q84M92"/>
<dbReference type="PaxDb" id="3702-AT1G18450.1"/>
<dbReference type="ProteomicsDB" id="246979"/>
<dbReference type="EnsemblPlants" id="AT1G18450.1">
    <property type="protein sequence ID" value="AT1G18450.1"/>
    <property type="gene ID" value="AT1G18450"/>
</dbReference>
<dbReference type="GeneID" id="838425"/>
<dbReference type="Gramene" id="AT1G18450.1">
    <property type="protein sequence ID" value="AT1G18450.1"/>
    <property type="gene ID" value="AT1G18450"/>
</dbReference>
<dbReference type="KEGG" id="ath:AT1G18450"/>
<dbReference type="Araport" id="AT1G18450"/>
<dbReference type="TAIR" id="AT1G18450">
    <property type="gene designation" value="ARP4"/>
</dbReference>
<dbReference type="eggNOG" id="KOG0679">
    <property type="taxonomic scope" value="Eukaryota"/>
</dbReference>
<dbReference type="HOGENOM" id="CLU_027965_6_2_1"/>
<dbReference type="InParanoid" id="Q84M92"/>
<dbReference type="OMA" id="MTEAPWN"/>
<dbReference type="PhylomeDB" id="Q84M92"/>
<dbReference type="CD-CODE" id="4299E36E">
    <property type="entry name" value="Nucleolus"/>
</dbReference>
<dbReference type="PRO" id="PR:Q84M92"/>
<dbReference type="Proteomes" id="UP000006548">
    <property type="component" value="Chromosome 1"/>
</dbReference>
<dbReference type="ExpressionAtlas" id="Q84M92">
    <property type="expression patterns" value="baseline and differential"/>
</dbReference>
<dbReference type="GO" id="GO:0005737">
    <property type="term" value="C:cytoplasm"/>
    <property type="evidence" value="ECO:0007669"/>
    <property type="project" value="UniProtKB-SubCell"/>
</dbReference>
<dbReference type="GO" id="GO:0031011">
    <property type="term" value="C:Ino80 complex"/>
    <property type="evidence" value="ECO:0000314"/>
    <property type="project" value="TAIR"/>
</dbReference>
<dbReference type="GO" id="GO:0005730">
    <property type="term" value="C:nucleolus"/>
    <property type="evidence" value="ECO:0007005"/>
    <property type="project" value="TAIR"/>
</dbReference>
<dbReference type="GO" id="GO:0005634">
    <property type="term" value="C:nucleus"/>
    <property type="evidence" value="ECO:0000314"/>
    <property type="project" value="TAIR"/>
</dbReference>
<dbReference type="GO" id="GO:0000812">
    <property type="term" value="C:Swr1 complex"/>
    <property type="evidence" value="ECO:0000314"/>
    <property type="project" value="TAIR"/>
</dbReference>
<dbReference type="GO" id="GO:0005200">
    <property type="term" value="F:structural constituent of cytoskeleton"/>
    <property type="evidence" value="ECO:0000250"/>
    <property type="project" value="TAIR"/>
</dbReference>
<dbReference type="GO" id="GO:0006325">
    <property type="term" value="P:chromatin organization"/>
    <property type="evidence" value="ECO:0000304"/>
    <property type="project" value="TAIR"/>
</dbReference>
<dbReference type="GO" id="GO:0048574">
    <property type="term" value="P:long-day photoperiodism, flowering"/>
    <property type="evidence" value="ECO:0000315"/>
    <property type="project" value="TAIR"/>
</dbReference>
<dbReference type="GO" id="GO:0048235">
    <property type="term" value="P:pollen sperm cell differentiation"/>
    <property type="evidence" value="ECO:0000315"/>
    <property type="project" value="TAIR"/>
</dbReference>
<dbReference type="CDD" id="cd13395">
    <property type="entry name" value="ASKHA_NBD_Arp4_ACTL6-like"/>
    <property type="match status" value="1"/>
</dbReference>
<dbReference type="FunFam" id="3.30.420.40:FF:000151">
    <property type="entry name" value="Actin-related protein 4"/>
    <property type="match status" value="1"/>
</dbReference>
<dbReference type="FunFam" id="3.30.420.40:FF:000127">
    <property type="entry name" value="actin-related protein 4"/>
    <property type="match status" value="1"/>
</dbReference>
<dbReference type="Gene3D" id="3.30.420.40">
    <property type="match status" value="3"/>
</dbReference>
<dbReference type="Gene3D" id="3.90.640.10">
    <property type="entry name" value="Actin, Chain A, domain 4"/>
    <property type="match status" value="1"/>
</dbReference>
<dbReference type="InterPro" id="IPR004000">
    <property type="entry name" value="Actin"/>
</dbReference>
<dbReference type="InterPro" id="IPR043129">
    <property type="entry name" value="ATPase_NBD"/>
</dbReference>
<dbReference type="PANTHER" id="PTHR11937">
    <property type="entry name" value="ACTIN"/>
    <property type="match status" value="1"/>
</dbReference>
<dbReference type="Pfam" id="PF00022">
    <property type="entry name" value="Actin"/>
    <property type="match status" value="1"/>
</dbReference>
<dbReference type="SMART" id="SM00268">
    <property type="entry name" value="ACTIN"/>
    <property type="match status" value="1"/>
</dbReference>
<dbReference type="SUPFAM" id="SSF53067">
    <property type="entry name" value="Actin-like ATPase domain"/>
    <property type="match status" value="2"/>
</dbReference>